<name>RIP1_CUCFI</name>
<reference key="1">
    <citation type="journal article" date="2000" name="Plant Biotechnol.">
        <title>Cloning and analysis of a cDNA coding a putative ribosome-inactivating protein from Cucumis figarei.</title>
        <authorList>
            <person name="Yamada T."/>
            <person name="Ohki S.T."/>
            <person name="Osaki T."/>
        </authorList>
    </citation>
    <scope>NUCLEOTIDE SEQUENCE [MRNA]</scope>
</reference>
<feature type="signal peptide" evidence="2">
    <location>
        <begin position="1"/>
        <end position="21"/>
    </location>
</feature>
<feature type="chain" id="PRO_0000030757" description="Putative ribosome-inactivating protein">
    <location>
        <begin position="22"/>
        <end position="286"/>
    </location>
</feature>
<feature type="active site" evidence="1">
    <location>
        <position position="185"/>
    </location>
</feature>
<feature type="glycosylation site" description="N-linked (GlcNAc...) asparagine" evidence="2">
    <location>
        <position position="103"/>
    </location>
</feature>
<feature type="glycosylation site" description="N-linked (GlcNAc...) asparagine" evidence="2">
    <location>
        <position position="110"/>
    </location>
</feature>
<feature type="glycosylation site" description="N-linked (GlcNAc...) asparagine" evidence="2">
    <location>
        <position position="252"/>
    </location>
</feature>
<keyword id="KW-0051">Antiviral defense</keyword>
<keyword id="KW-0325">Glycoprotein</keyword>
<keyword id="KW-0378">Hydrolase</keyword>
<keyword id="KW-0611">Plant defense</keyword>
<keyword id="KW-0652">Protein synthesis inhibitor</keyword>
<keyword id="KW-0732">Signal</keyword>
<keyword id="KW-0800">Toxin</keyword>
<comment type="catalytic activity">
    <reaction>
        <text>Endohydrolysis of the N-glycosidic bond at one specific adenosine on the 28S rRNA.</text>
        <dbReference type="EC" id="3.2.2.22"/>
    </reaction>
</comment>
<comment type="similarity">
    <text evidence="3">Belongs to the ribosome-inactivating protein family. Type 1 RIP subfamily.</text>
</comment>
<proteinExistence type="evidence at transcript level"/>
<protein>
    <recommendedName>
        <fullName>Putative ribosome-inactivating protein</fullName>
        <ecNumber>3.2.2.22</ecNumber>
    </recommendedName>
    <alternativeName>
        <fullName>rRNA N-glycosidase</fullName>
    </alternativeName>
</protein>
<dbReference type="EC" id="3.2.2.22"/>
<dbReference type="EMBL" id="AB045560">
    <property type="protein sequence ID" value="BAB19677.1"/>
    <property type="molecule type" value="mRNA"/>
</dbReference>
<dbReference type="SMR" id="Q9FRX4"/>
<dbReference type="GO" id="GO:0030598">
    <property type="term" value="F:rRNA N-glycosylase activity"/>
    <property type="evidence" value="ECO:0007669"/>
    <property type="project" value="UniProtKB-EC"/>
</dbReference>
<dbReference type="GO" id="GO:0090729">
    <property type="term" value="F:toxin activity"/>
    <property type="evidence" value="ECO:0007669"/>
    <property type="project" value="UniProtKB-KW"/>
</dbReference>
<dbReference type="GO" id="GO:0051607">
    <property type="term" value="P:defense response to virus"/>
    <property type="evidence" value="ECO:0007669"/>
    <property type="project" value="UniProtKB-KW"/>
</dbReference>
<dbReference type="GO" id="GO:0017148">
    <property type="term" value="P:negative regulation of translation"/>
    <property type="evidence" value="ECO:0007669"/>
    <property type="project" value="UniProtKB-KW"/>
</dbReference>
<dbReference type="Gene3D" id="3.40.420.10">
    <property type="entry name" value="Ricin (A subunit), domain 1"/>
    <property type="match status" value="1"/>
</dbReference>
<dbReference type="Gene3D" id="4.10.470.10">
    <property type="entry name" value="Ricin (A Subunit), domain 2"/>
    <property type="match status" value="1"/>
</dbReference>
<dbReference type="InterPro" id="IPR036041">
    <property type="entry name" value="Ribosome-inact_prot_sf"/>
</dbReference>
<dbReference type="InterPro" id="IPR017989">
    <property type="entry name" value="Ribosome_inactivat_1/2"/>
</dbReference>
<dbReference type="InterPro" id="IPR001574">
    <property type="entry name" value="Ribosome_inactivat_prot"/>
</dbReference>
<dbReference type="InterPro" id="IPR017988">
    <property type="entry name" value="Ribosome_inactivat_prot_CS"/>
</dbReference>
<dbReference type="InterPro" id="IPR016138">
    <property type="entry name" value="Ribosome_inactivat_prot_sub1"/>
</dbReference>
<dbReference type="InterPro" id="IPR016139">
    <property type="entry name" value="Ribosome_inactivat_prot_sub2"/>
</dbReference>
<dbReference type="PANTHER" id="PTHR33453">
    <property type="match status" value="1"/>
</dbReference>
<dbReference type="PANTHER" id="PTHR33453:SF34">
    <property type="entry name" value="RIBOSOME-INACTIVATING PROTEIN"/>
    <property type="match status" value="1"/>
</dbReference>
<dbReference type="Pfam" id="PF00161">
    <property type="entry name" value="RIP"/>
    <property type="match status" value="1"/>
</dbReference>
<dbReference type="PRINTS" id="PR00396">
    <property type="entry name" value="SHIGARICIN"/>
</dbReference>
<dbReference type="SUPFAM" id="SSF56371">
    <property type="entry name" value="Ribosome inactivating proteins (RIP)"/>
    <property type="match status" value="1"/>
</dbReference>
<dbReference type="PROSITE" id="PS00275">
    <property type="entry name" value="SHIGA_RICIN"/>
    <property type="match status" value="1"/>
</dbReference>
<organism>
    <name type="scientific">Cucumis ficifolius</name>
    <name type="common">Cucumis figarei</name>
    <dbReference type="NCBI Taxonomy" id="131071"/>
    <lineage>
        <taxon>Eukaryota</taxon>
        <taxon>Viridiplantae</taxon>
        <taxon>Streptophyta</taxon>
        <taxon>Embryophyta</taxon>
        <taxon>Tracheophyta</taxon>
        <taxon>Spermatophyta</taxon>
        <taxon>Magnoliopsida</taxon>
        <taxon>eudicotyledons</taxon>
        <taxon>Gunneridae</taxon>
        <taxon>Pentapetalae</taxon>
        <taxon>rosids</taxon>
        <taxon>fabids</taxon>
        <taxon>Cucurbitales</taxon>
        <taxon>Cucurbitaceae</taxon>
        <taxon>Benincaseae</taxon>
        <taxon>Cucumis</taxon>
    </lineage>
</organism>
<sequence>MNRFSVLMCLVILSIFHGVPTAEGDVTVKFSLLGSNHKSYSKFITSMRNALPNAGDIYNIPLLVPSISGSRRYILMQLSNYEGNTITMAVDVTNVYIMGYLVNGTSYFFNETDAQLASKFVFQGTKSITLPYSGNYQKLQSVARKERDSIPLGFMALDSAISTLYYYDSRSAPIAFLVLIQTTAEAARYKYIEKQIIDRISVSKVPDLAAISLENEWSLLSKQIQIAKSNNGQFQTPVKIINDKGILTEVTNVSSLVVTKNIMLLLNKLNIASFEDHVISTTMPQA</sequence>
<evidence type="ECO:0000250" key="1"/>
<evidence type="ECO:0000255" key="2"/>
<evidence type="ECO:0000305" key="3"/>
<accession>Q9FRX4</accession>